<proteinExistence type="inferred from homology"/>
<reference key="1">
    <citation type="submission" date="2008-10" db="EMBL/GenBank/DDBJ databases">
        <title>Genome sequence of Bacillus cereus B4264.</title>
        <authorList>
            <person name="Dodson R.J."/>
            <person name="Durkin A.S."/>
            <person name="Rosovitz M.J."/>
            <person name="Rasko D.A."/>
            <person name="Hoffmaster A."/>
            <person name="Ravel J."/>
            <person name="Sutton G."/>
        </authorList>
    </citation>
    <scope>NUCLEOTIDE SEQUENCE [LARGE SCALE GENOMIC DNA]</scope>
    <source>
        <strain>B4264</strain>
    </source>
</reference>
<evidence type="ECO:0000255" key="1">
    <source>
        <dbReference type="HAMAP-Rule" id="MF_01680"/>
    </source>
</evidence>
<sequence>MSIQVFCDFDGTITNNDNIMSIMEKFAPPEAEEVKNKILSQELSIQEGVSQLFQLIPTNLHDDIIQFLIETAEIRSGFHEFIQFVKENNISFYVISGGMDFFVYPLLQGIIPKEQIYCNETDFSAEFITVKWPHSCDDHCQNHCGLCKSSLIRKLSDTDDFHIVIGDSITDLQAAKQADKVFARDFLITKCEENHIAYTPFETFQDVQAELKLLLEVKA</sequence>
<comment type="function">
    <text evidence="1">Dephosphorylates 2-hydroxy-3-keto-5-methylthiopentenyl-1-phosphate (HK-MTPenyl-1-P) yielding 1,2-dihydroxy-3-keto-5-methylthiopentene (DHK-MTPene).</text>
</comment>
<comment type="catalytic activity">
    <reaction evidence="1">
        <text>2-hydroxy-5-methylsulfanyl-3-oxopent-1-enyl phosphate + H2O = 1,2-dihydroxy-5-(methylsulfanyl)pent-1-en-3-one + phosphate</text>
        <dbReference type="Rhea" id="RHEA:14481"/>
        <dbReference type="ChEBI" id="CHEBI:15377"/>
        <dbReference type="ChEBI" id="CHEBI:43474"/>
        <dbReference type="ChEBI" id="CHEBI:49252"/>
        <dbReference type="ChEBI" id="CHEBI:59505"/>
        <dbReference type="EC" id="3.1.3.87"/>
    </reaction>
</comment>
<comment type="pathway">
    <text evidence="1">Amino-acid biosynthesis; L-methionine biosynthesis via salvage pathway; L-methionine from S-methyl-5-thio-alpha-D-ribose 1-phosphate: step 4/6.</text>
</comment>
<comment type="similarity">
    <text evidence="1">Belongs to the HAD-like hydrolase superfamily. MtnX family.</text>
</comment>
<name>MTNX_BACC4</name>
<gene>
    <name evidence="1" type="primary">mtnX</name>
    <name type="ordered locus">BCB4264_A4146</name>
</gene>
<accession>B7H928</accession>
<protein>
    <recommendedName>
        <fullName evidence="1">2-hydroxy-3-keto-5-methylthiopentenyl-1-phosphate phosphatase</fullName>
        <shortName evidence="1">HK-MTPenyl-1-P phosphatase</shortName>
        <ecNumber evidence="1">3.1.3.87</ecNumber>
    </recommendedName>
</protein>
<organism>
    <name type="scientific">Bacillus cereus (strain B4264)</name>
    <dbReference type="NCBI Taxonomy" id="405532"/>
    <lineage>
        <taxon>Bacteria</taxon>
        <taxon>Bacillati</taxon>
        <taxon>Bacillota</taxon>
        <taxon>Bacilli</taxon>
        <taxon>Bacillales</taxon>
        <taxon>Bacillaceae</taxon>
        <taxon>Bacillus</taxon>
        <taxon>Bacillus cereus group</taxon>
    </lineage>
</organism>
<keyword id="KW-0028">Amino-acid biosynthesis</keyword>
<keyword id="KW-0378">Hydrolase</keyword>
<keyword id="KW-0486">Methionine biosynthesis</keyword>
<feature type="chain" id="PRO_1000187386" description="2-hydroxy-3-keto-5-methylthiopentenyl-1-phosphate phosphatase">
    <location>
        <begin position="1"/>
        <end position="219"/>
    </location>
</feature>
<dbReference type="EC" id="3.1.3.87" evidence="1"/>
<dbReference type="EMBL" id="CP001176">
    <property type="protein sequence ID" value="ACK62876.1"/>
    <property type="molecule type" value="Genomic_DNA"/>
</dbReference>
<dbReference type="RefSeq" id="WP_000027461.1">
    <property type="nucleotide sequence ID" value="NC_011725.1"/>
</dbReference>
<dbReference type="SMR" id="B7H928"/>
<dbReference type="KEGG" id="bcb:BCB4264_A4146"/>
<dbReference type="HOGENOM" id="CLU_058495_2_1_9"/>
<dbReference type="UniPathway" id="UPA00904">
    <property type="reaction ID" value="UER00877"/>
</dbReference>
<dbReference type="Proteomes" id="UP000007096">
    <property type="component" value="Chromosome"/>
</dbReference>
<dbReference type="GO" id="GO:0043716">
    <property type="term" value="F:2-hydroxy-3-keto-5-methylthiopentenyl-1-phosphate phosphatase activity"/>
    <property type="evidence" value="ECO:0007669"/>
    <property type="project" value="UniProtKB-UniRule"/>
</dbReference>
<dbReference type="GO" id="GO:0019509">
    <property type="term" value="P:L-methionine salvage from methylthioadenosine"/>
    <property type="evidence" value="ECO:0007669"/>
    <property type="project" value="UniProtKB-UniRule"/>
</dbReference>
<dbReference type="CDD" id="cd07524">
    <property type="entry name" value="HAD_Pase"/>
    <property type="match status" value="1"/>
</dbReference>
<dbReference type="Gene3D" id="3.90.1470.20">
    <property type="match status" value="1"/>
</dbReference>
<dbReference type="Gene3D" id="3.40.50.1000">
    <property type="entry name" value="HAD superfamily/HAD-like"/>
    <property type="match status" value="1"/>
</dbReference>
<dbReference type="HAMAP" id="MF_01680">
    <property type="entry name" value="Salvage_MtnX"/>
    <property type="match status" value="1"/>
</dbReference>
<dbReference type="InterPro" id="IPR050849">
    <property type="entry name" value="HAD-like_hydrolase_phosphatase"/>
</dbReference>
<dbReference type="InterPro" id="IPR036412">
    <property type="entry name" value="HAD-like_sf"/>
</dbReference>
<dbReference type="InterPro" id="IPR017718">
    <property type="entry name" value="HAD-SF_hydro_IB_MtnX"/>
</dbReference>
<dbReference type="InterPro" id="IPR006384">
    <property type="entry name" value="HAD_hydro_PyrdxlP_Pase-like"/>
</dbReference>
<dbReference type="InterPro" id="IPR023214">
    <property type="entry name" value="HAD_sf"/>
</dbReference>
<dbReference type="NCBIfam" id="TIGR01489">
    <property type="entry name" value="DKMTPPase-SF"/>
    <property type="match status" value="1"/>
</dbReference>
<dbReference type="NCBIfam" id="TIGR01488">
    <property type="entry name" value="HAD-SF-IB"/>
    <property type="match status" value="1"/>
</dbReference>
<dbReference type="NCBIfam" id="NF007103">
    <property type="entry name" value="PRK09552.1"/>
    <property type="match status" value="1"/>
</dbReference>
<dbReference type="NCBIfam" id="TIGR03333">
    <property type="entry name" value="salvage_mtnX"/>
    <property type="match status" value="1"/>
</dbReference>
<dbReference type="PANTHER" id="PTHR28181:SF2">
    <property type="entry name" value="PHOSPHORIC MONOESTER HYDROLASE"/>
    <property type="match status" value="1"/>
</dbReference>
<dbReference type="PANTHER" id="PTHR28181">
    <property type="entry name" value="UPF0655 PROTEIN YCR015C"/>
    <property type="match status" value="1"/>
</dbReference>
<dbReference type="Pfam" id="PF12710">
    <property type="entry name" value="HAD"/>
    <property type="match status" value="1"/>
</dbReference>
<dbReference type="SUPFAM" id="SSF56784">
    <property type="entry name" value="HAD-like"/>
    <property type="match status" value="1"/>
</dbReference>